<evidence type="ECO:0000255" key="1">
    <source>
        <dbReference type="HAMAP-Rule" id="MF_00456"/>
    </source>
</evidence>
<name>PROB_STRP8</name>
<proteinExistence type="inferred from homology"/>
<dbReference type="EC" id="2.7.2.11" evidence="1"/>
<dbReference type="EMBL" id="AE009949">
    <property type="protein sequence ID" value="AAL98221.1"/>
    <property type="molecule type" value="Genomic_DNA"/>
</dbReference>
<dbReference type="RefSeq" id="WP_011018076.1">
    <property type="nucleotide sequence ID" value="NC_003485.1"/>
</dbReference>
<dbReference type="SMR" id="Q8NZX8"/>
<dbReference type="KEGG" id="spm:spyM18_1681"/>
<dbReference type="HOGENOM" id="CLU_025400_0_2_9"/>
<dbReference type="UniPathway" id="UPA00098">
    <property type="reaction ID" value="UER00359"/>
</dbReference>
<dbReference type="GO" id="GO:0005829">
    <property type="term" value="C:cytosol"/>
    <property type="evidence" value="ECO:0007669"/>
    <property type="project" value="TreeGrafter"/>
</dbReference>
<dbReference type="GO" id="GO:0005524">
    <property type="term" value="F:ATP binding"/>
    <property type="evidence" value="ECO:0007669"/>
    <property type="project" value="UniProtKB-KW"/>
</dbReference>
<dbReference type="GO" id="GO:0004349">
    <property type="term" value="F:glutamate 5-kinase activity"/>
    <property type="evidence" value="ECO:0007669"/>
    <property type="project" value="UniProtKB-UniRule"/>
</dbReference>
<dbReference type="GO" id="GO:0055129">
    <property type="term" value="P:L-proline biosynthetic process"/>
    <property type="evidence" value="ECO:0007669"/>
    <property type="project" value="UniProtKB-UniRule"/>
</dbReference>
<dbReference type="CDD" id="cd04242">
    <property type="entry name" value="AAK_G5K_ProB"/>
    <property type="match status" value="1"/>
</dbReference>
<dbReference type="FunFam" id="3.40.1160.10:FF:000006">
    <property type="entry name" value="Glutamate 5-kinase"/>
    <property type="match status" value="1"/>
</dbReference>
<dbReference type="Gene3D" id="3.40.1160.10">
    <property type="entry name" value="Acetylglutamate kinase-like"/>
    <property type="match status" value="1"/>
</dbReference>
<dbReference type="HAMAP" id="MF_00456">
    <property type="entry name" value="ProB"/>
    <property type="match status" value="1"/>
</dbReference>
<dbReference type="InterPro" id="IPR036393">
    <property type="entry name" value="AceGlu_kinase-like_sf"/>
</dbReference>
<dbReference type="InterPro" id="IPR001048">
    <property type="entry name" value="Asp/Glu/Uridylate_kinase"/>
</dbReference>
<dbReference type="InterPro" id="IPR041739">
    <property type="entry name" value="G5K_ProB"/>
</dbReference>
<dbReference type="InterPro" id="IPR001057">
    <property type="entry name" value="Glu/AcGlu_kinase"/>
</dbReference>
<dbReference type="InterPro" id="IPR011529">
    <property type="entry name" value="Glu_5kinase"/>
</dbReference>
<dbReference type="InterPro" id="IPR005715">
    <property type="entry name" value="Glu_5kinase/COase_Synthase"/>
</dbReference>
<dbReference type="InterPro" id="IPR019797">
    <property type="entry name" value="Glutamate_5-kinase_CS"/>
</dbReference>
<dbReference type="NCBIfam" id="TIGR01027">
    <property type="entry name" value="proB"/>
    <property type="match status" value="1"/>
</dbReference>
<dbReference type="PANTHER" id="PTHR43654">
    <property type="entry name" value="GLUTAMATE 5-KINASE"/>
    <property type="match status" value="1"/>
</dbReference>
<dbReference type="PANTHER" id="PTHR43654:SF1">
    <property type="entry name" value="ISOPENTENYL PHOSPHATE KINASE"/>
    <property type="match status" value="1"/>
</dbReference>
<dbReference type="Pfam" id="PF00696">
    <property type="entry name" value="AA_kinase"/>
    <property type="match status" value="1"/>
</dbReference>
<dbReference type="PIRSF" id="PIRSF000729">
    <property type="entry name" value="GK"/>
    <property type="match status" value="1"/>
</dbReference>
<dbReference type="PRINTS" id="PR00474">
    <property type="entry name" value="GLU5KINASE"/>
</dbReference>
<dbReference type="SUPFAM" id="SSF53633">
    <property type="entry name" value="Carbamate kinase-like"/>
    <property type="match status" value="1"/>
</dbReference>
<dbReference type="PROSITE" id="PS00902">
    <property type="entry name" value="GLUTAMATE_5_KINASE"/>
    <property type="match status" value="1"/>
</dbReference>
<feature type="chain" id="PRO_0000109737" description="Glutamate 5-kinase">
    <location>
        <begin position="1"/>
        <end position="273"/>
    </location>
</feature>
<feature type="binding site" evidence="1">
    <location>
        <position position="15"/>
    </location>
    <ligand>
        <name>ATP</name>
        <dbReference type="ChEBI" id="CHEBI:30616"/>
    </ligand>
</feature>
<feature type="binding site" evidence="1">
    <location>
        <position position="55"/>
    </location>
    <ligand>
        <name>substrate</name>
    </ligand>
</feature>
<feature type="binding site" evidence="1">
    <location>
        <position position="142"/>
    </location>
    <ligand>
        <name>substrate</name>
    </ligand>
</feature>
<feature type="binding site" evidence="1">
    <location>
        <position position="158"/>
    </location>
    <ligand>
        <name>substrate</name>
    </ligand>
</feature>
<feature type="binding site" evidence="1">
    <location>
        <begin position="178"/>
        <end position="179"/>
    </location>
    <ligand>
        <name>ATP</name>
        <dbReference type="ChEBI" id="CHEBI:30616"/>
    </ligand>
</feature>
<feature type="binding site" evidence="1">
    <location>
        <begin position="220"/>
        <end position="226"/>
    </location>
    <ligand>
        <name>ATP</name>
        <dbReference type="ChEBI" id="CHEBI:30616"/>
    </ligand>
</feature>
<accession>Q8NZX8</accession>
<protein>
    <recommendedName>
        <fullName evidence="1">Glutamate 5-kinase</fullName>
        <ecNumber evidence="1">2.7.2.11</ecNumber>
    </recommendedName>
    <alternativeName>
        <fullName evidence="1">Gamma-glutamyl kinase</fullName>
        <shortName evidence="1">GK</shortName>
    </alternativeName>
</protein>
<gene>
    <name evidence="1" type="primary">proB</name>
    <name type="ordered locus">spyM18_1681</name>
</gene>
<comment type="function">
    <text evidence="1">Catalyzes the transfer of a phosphate group to glutamate to form L-glutamate 5-phosphate.</text>
</comment>
<comment type="catalytic activity">
    <reaction evidence="1">
        <text>L-glutamate + ATP = L-glutamyl 5-phosphate + ADP</text>
        <dbReference type="Rhea" id="RHEA:14877"/>
        <dbReference type="ChEBI" id="CHEBI:29985"/>
        <dbReference type="ChEBI" id="CHEBI:30616"/>
        <dbReference type="ChEBI" id="CHEBI:58274"/>
        <dbReference type="ChEBI" id="CHEBI:456216"/>
        <dbReference type="EC" id="2.7.2.11"/>
    </reaction>
</comment>
<comment type="pathway">
    <text evidence="1">Amino-acid biosynthesis; L-proline biosynthesis; L-glutamate 5-semialdehyde from L-glutamate: step 1/2.</text>
</comment>
<comment type="subcellular location">
    <subcellularLocation>
        <location evidence="1">Cytoplasm</location>
    </subcellularLocation>
</comment>
<comment type="similarity">
    <text evidence="1">Belongs to the glutamate 5-kinase family.</text>
</comment>
<sequence>MMKRQFEDVTRIVIKIGTSSLVLPTGKINLEKIDQLAFVISSLMNKGKEVILVSSGAMGFGLDILKMEKRPTNLAKQQAVSSVGQVAMMSLYSQIFAHYQTNVSQILLTRDVVVFPESLANVTNAFESLISLGIVPIVNENDAVSVDEMDHATKFGDNDRLSAVVAGITKADLLIMLSDIDGLFDKNPTIYEDAQLRSHVAVVTQEIIASAGGAGSKFGTGGMLSKIQSAQMVFENKGQMVLMNGANPRDILRVLEGQPLGTWFKQIEEVTHD</sequence>
<keyword id="KW-0028">Amino-acid biosynthesis</keyword>
<keyword id="KW-0067">ATP-binding</keyword>
<keyword id="KW-0963">Cytoplasm</keyword>
<keyword id="KW-0418">Kinase</keyword>
<keyword id="KW-0547">Nucleotide-binding</keyword>
<keyword id="KW-0641">Proline biosynthesis</keyword>
<keyword id="KW-0808">Transferase</keyword>
<organism>
    <name type="scientific">Streptococcus pyogenes serotype M18 (strain MGAS8232)</name>
    <dbReference type="NCBI Taxonomy" id="186103"/>
    <lineage>
        <taxon>Bacteria</taxon>
        <taxon>Bacillati</taxon>
        <taxon>Bacillota</taxon>
        <taxon>Bacilli</taxon>
        <taxon>Lactobacillales</taxon>
        <taxon>Streptococcaceae</taxon>
        <taxon>Streptococcus</taxon>
    </lineage>
</organism>
<reference key="1">
    <citation type="journal article" date="2002" name="Proc. Natl. Acad. Sci. U.S.A.">
        <title>Genome sequence and comparative microarray analysis of serotype M18 group A Streptococcus strains associated with acute rheumatic fever outbreaks.</title>
        <authorList>
            <person name="Smoot J.C."/>
            <person name="Barbian K.D."/>
            <person name="Van Gompel J.J."/>
            <person name="Smoot L.M."/>
            <person name="Chaussee M.S."/>
            <person name="Sylva G.L."/>
            <person name="Sturdevant D.E."/>
            <person name="Ricklefs S.M."/>
            <person name="Porcella S.F."/>
            <person name="Parkins L.D."/>
            <person name="Beres S.B."/>
            <person name="Campbell D.S."/>
            <person name="Smith T.M."/>
            <person name="Zhang Q."/>
            <person name="Kapur V."/>
            <person name="Daly J.A."/>
            <person name="Veasy L.G."/>
            <person name="Musser J.M."/>
        </authorList>
    </citation>
    <scope>NUCLEOTIDE SEQUENCE [LARGE SCALE GENOMIC DNA]</scope>
    <source>
        <strain>MGAS8232</strain>
    </source>
</reference>